<organism>
    <name type="scientific">Oryza sativa subsp. japonica</name>
    <name type="common">Rice</name>
    <dbReference type="NCBI Taxonomy" id="39947"/>
    <lineage>
        <taxon>Eukaryota</taxon>
        <taxon>Viridiplantae</taxon>
        <taxon>Streptophyta</taxon>
        <taxon>Embryophyta</taxon>
        <taxon>Tracheophyta</taxon>
        <taxon>Spermatophyta</taxon>
        <taxon>Magnoliopsida</taxon>
        <taxon>Liliopsida</taxon>
        <taxon>Poales</taxon>
        <taxon>Poaceae</taxon>
        <taxon>BOP clade</taxon>
        <taxon>Oryzoideae</taxon>
        <taxon>Oryzeae</taxon>
        <taxon>Oryzinae</taxon>
        <taxon>Oryza</taxon>
        <taxon>Oryza sativa</taxon>
    </lineage>
</organism>
<evidence type="ECO:0000250" key="1">
    <source>
        <dbReference type="UniProtKB" id="Q7PC76"/>
    </source>
</evidence>
<evidence type="ECO:0000255" key="2"/>
<evidence type="ECO:0000303" key="3">
    <source>
    </source>
</evidence>
<evidence type="ECO:0000305" key="4"/>
<feature type="chain" id="PRO_0000319374" description="Probable glucomannan 4-beta-mannosyltransferase 3">
    <location>
        <begin position="1"/>
        <end position="551"/>
    </location>
</feature>
<feature type="transmembrane region" description="Helical" evidence="2">
    <location>
        <begin position="60"/>
        <end position="80"/>
    </location>
</feature>
<feature type="transmembrane region" description="Helical" evidence="2">
    <location>
        <begin position="386"/>
        <end position="406"/>
    </location>
</feature>
<feature type="transmembrane region" description="Helical" evidence="2">
    <location>
        <begin position="409"/>
        <end position="429"/>
    </location>
</feature>
<feature type="transmembrane region" description="Helical" evidence="2">
    <location>
        <begin position="504"/>
        <end position="524"/>
    </location>
</feature>
<feature type="transmembrane region" description="Helical" evidence="2">
    <location>
        <begin position="525"/>
        <end position="545"/>
    </location>
</feature>
<feature type="active site" evidence="2">
    <location>
        <position position="154"/>
    </location>
</feature>
<feature type="active site" evidence="2">
    <location>
        <position position="307"/>
    </location>
</feature>
<feature type="binding site" evidence="2">
    <location>
        <position position="213"/>
    </location>
    <ligand>
        <name>substrate</name>
    </ligand>
</feature>
<feature type="binding site" evidence="2">
    <location>
        <position position="215"/>
    </location>
    <ligand>
        <name>substrate</name>
    </ligand>
</feature>
<protein>
    <recommendedName>
        <fullName evidence="4">Probable glucomannan 4-beta-mannosyltransferase 3</fullName>
        <ecNumber evidence="1">2.4.1.32</ecNumber>
    </recommendedName>
    <alternativeName>
        <fullName evidence="3">Cellulose synthase-like protein A3</fullName>
        <shortName evidence="3">OsCslA3</shortName>
    </alternativeName>
    <alternativeName>
        <fullName evidence="4">Glucomannan synthase</fullName>
    </alternativeName>
    <alternativeName>
        <fullName evidence="4">Mannan synthase 3</fullName>
    </alternativeName>
</protein>
<keyword id="KW-0961">Cell wall biogenesis/degradation</keyword>
<keyword id="KW-0328">Glycosyltransferase</keyword>
<keyword id="KW-0333">Golgi apparatus</keyword>
<keyword id="KW-0472">Membrane</keyword>
<keyword id="KW-1185">Reference proteome</keyword>
<keyword id="KW-0808">Transferase</keyword>
<keyword id="KW-0812">Transmembrane</keyword>
<keyword id="KW-1133">Transmembrane helix</keyword>
<name>CSLA3_ORYSJ</name>
<gene>
    <name evidence="3" type="primary">CSLA3</name>
    <name type="ordered locus">Os06g0230100</name>
    <name type="ordered locus">LOC_Os06g12460</name>
    <name type="ORF">P0525F01.26</name>
</gene>
<reference key="1">
    <citation type="journal article" date="2005" name="Nature">
        <title>The map-based sequence of the rice genome.</title>
        <authorList>
            <consortium name="International rice genome sequencing project (IRGSP)"/>
        </authorList>
    </citation>
    <scope>NUCLEOTIDE SEQUENCE [LARGE SCALE GENOMIC DNA]</scope>
    <source>
        <strain>cv. Nipponbare</strain>
    </source>
</reference>
<reference key="2">
    <citation type="journal article" date="2008" name="Nucleic Acids Res.">
        <title>The rice annotation project database (RAP-DB): 2008 update.</title>
        <authorList>
            <consortium name="The rice annotation project (RAP)"/>
        </authorList>
    </citation>
    <scope>GENOME REANNOTATION</scope>
    <source>
        <strain>cv. Nipponbare</strain>
    </source>
</reference>
<reference key="3">
    <citation type="journal article" date="2013" name="Rice">
        <title>Improvement of the Oryza sativa Nipponbare reference genome using next generation sequence and optical map data.</title>
        <authorList>
            <person name="Kawahara Y."/>
            <person name="de la Bastide M."/>
            <person name="Hamilton J.P."/>
            <person name="Kanamori H."/>
            <person name="McCombie W.R."/>
            <person name="Ouyang S."/>
            <person name="Schwartz D.C."/>
            <person name="Tanaka T."/>
            <person name="Wu J."/>
            <person name="Zhou S."/>
            <person name="Childs K.L."/>
            <person name="Davidson R.M."/>
            <person name="Lin H."/>
            <person name="Quesada-Ocampo L."/>
            <person name="Vaillancourt B."/>
            <person name="Sakai H."/>
            <person name="Lee S.S."/>
            <person name="Kim J."/>
            <person name="Numa H."/>
            <person name="Itoh T."/>
            <person name="Buell C.R."/>
            <person name="Matsumoto T."/>
        </authorList>
    </citation>
    <scope>GENOME REANNOTATION</scope>
    <source>
        <strain>cv. Nipponbare</strain>
    </source>
</reference>
<reference key="4">
    <citation type="journal article" date="2002" name="Plant Physiol.">
        <title>Cellulose synthase-like genes of rice.</title>
        <authorList>
            <person name="Hazen S.P."/>
            <person name="Scott-Craig J.S."/>
            <person name="Walton J.D."/>
        </authorList>
    </citation>
    <scope>IDENTIFICATION</scope>
    <scope>GENE FAMILY</scope>
    <scope>NOMENCLATURE</scope>
</reference>
<proteinExistence type="evidence at transcript level"/>
<comment type="function">
    <text evidence="1">Probable mannan synthase which consists of a 4-beta-mannosyltransferase activity on mannan using GDP-mannose. The beta-1,4-mannan product is the backbone for galactomannan synthesis by galactomannan galactosyltransferase. Galactomannan is a noncellulosic polysaccharides of plant cell wall.</text>
</comment>
<comment type="catalytic activity">
    <reaction evidence="1">
        <text>GDP-mannose + (glucomannan)n = GDP + (glucomannan)n+1.</text>
        <dbReference type="EC" id="2.4.1.32"/>
    </reaction>
</comment>
<comment type="subcellular location">
    <subcellularLocation>
        <location evidence="4">Golgi apparatus membrane</location>
        <topology evidence="4">Multi-pass membrane protein</topology>
    </subcellularLocation>
</comment>
<comment type="similarity">
    <text evidence="4">Belongs to the glycosyltransferase 2 family. Plant cellulose synthase-like A subfamily.</text>
</comment>
<comment type="sequence caution" evidence="4">
    <conflict type="erroneous gene model prediction">
        <sequence resource="EMBL-CDS" id="BAF19133"/>
    </conflict>
</comment>
<accession>Q67X45</accession>
<accession>Q0DDE0</accession>
<accession>Q7PC75</accession>
<dbReference type="EC" id="2.4.1.32" evidence="1"/>
<dbReference type="EMBL" id="AP003509">
    <property type="protein sequence ID" value="BAD37274.1"/>
    <property type="molecule type" value="Genomic_DNA"/>
</dbReference>
<dbReference type="EMBL" id="AP008212">
    <property type="protein sequence ID" value="BAF19133.1"/>
    <property type="status" value="ALT_SEQ"/>
    <property type="molecule type" value="Genomic_DNA"/>
</dbReference>
<dbReference type="EMBL" id="AP014962">
    <property type="status" value="NOT_ANNOTATED_CDS"/>
    <property type="molecule type" value="Genomic_DNA"/>
</dbReference>
<dbReference type="EMBL" id="BK000081">
    <property type="protein sequence ID" value="DAA01744.1"/>
    <property type="molecule type" value="Genomic_DNA"/>
</dbReference>
<dbReference type="RefSeq" id="XP_015644248.1">
    <property type="nucleotide sequence ID" value="XM_015788762.1"/>
</dbReference>
<dbReference type="SMR" id="Q67X45"/>
<dbReference type="FunCoup" id="Q67X45">
    <property type="interactions" value="16"/>
</dbReference>
<dbReference type="STRING" id="39947.Q67X45"/>
<dbReference type="CAZy" id="GT2">
    <property type="family name" value="Glycosyltransferase Family 2"/>
</dbReference>
<dbReference type="PaxDb" id="39947-Q67X45"/>
<dbReference type="KEGG" id="dosa:Os06g0230100"/>
<dbReference type="InParanoid" id="Q67X45"/>
<dbReference type="OrthoDB" id="72851at2759"/>
<dbReference type="Proteomes" id="UP000000763">
    <property type="component" value="Chromosome 6"/>
</dbReference>
<dbReference type="Proteomes" id="UP000059680">
    <property type="component" value="Chromosome 6"/>
</dbReference>
<dbReference type="GO" id="GO:0005794">
    <property type="term" value="C:Golgi apparatus"/>
    <property type="evidence" value="ECO:0000318"/>
    <property type="project" value="GO_Central"/>
</dbReference>
<dbReference type="GO" id="GO:0000139">
    <property type="term" value="C:Golgi membrane"/>
    <property type="evidence" value="ECO:0007669"/>
    <property type="project" value="UniProtKB-SubCell"/>
</dbReference>
<dbReference type="GO" id="GO:0047259">
    <property type="term" value="F:glucomannan 4-beta-mannosyltransferase activity"/>
    <property type="evidence" value="ECO:0007669"/>
    <property type="project" value="UniProtKB-EC"/>
</dbReference>
<dbReference type="GO" id="GO:0051753">
    <property type="term" value="F:mannan synthase activity"/>
    <property type="evidence" value="ECO:0000318"/>
    <property type="project" value="GO_Central"/>
</dbReference>
<dbReference type="GO" id="GO:0071555">
    <property type="term" value="P:cell wall organization"/>
    <property type="evidence" value="ECO:0007669"/>
    <property type="project" value="UniProtKB-KW"/>
</dbReference>
<dbReference type="CDD" id="cd06437">
    <property type="entry name" value="CESA_CaSu_A2"/>
    <property type="match status" value="1"/>
</dbReference>
<dbReference type="FunFam" id="3.90.550.10:FF:000015">
    <property type="entry name" value="Glucomannan 4-beta-mannosyltransferase 9"/>
    <property type="match status" value="1"/>
</dbReference>
<dbReference type="Gene3D" id="3.90.550.10">
    <property type="entry name" value="Spore Coat Polysaccharide Biosynthesis Protein SpsA, Chain A"/>
    <property type="match status" value="1"/>
</dbReference>
<dbReference type="InterPro" id="IPR001173">
    <property type="entry name" value="Glyco_trans_2-like"/>
</dbReference>
<dbReference type="InterPro" id="IPR029044">
    <property type="entry name" value="Nucleotide-diphossugar_trans"/>
</dbReference>
<dbReference type="PANTHER" id="PTHR32044:SF98">
    <property type="entry name" value="GLUCOMANNAN 4-BETA-MANNOSYLTRANSFERASE 3-RELATED"/>
    <property type="match status" value="1"/>
</dbReference>
<dbReference type="PANTHER" id="PTHR32044">
    <property type="entry name" value="GLUCOMANNAN 4-BETA-MANNOSYLTRANSFERASE 9"/>
    <property type="match status" value="1"/>
</dbReference>
<dbReference type="Pfam" id="PF13632">
    <property type="entry name" value="Glyco_trans_2_3"/>
    <property type="match status" value="1"/>
</dbReference>
<dbReference type="SUPFAM" id="SSF53448">
    <property type="entry name" value="Nucleotide-diphospho-sugar transferases"/>
    <property type="match status" value="1"/>
</dbReference>
<sequence length="551" mass="61548">MAMAGADGPTAGAAAAVRWRGGESLLLLLLRWPSSAELVAAWGAARASAVAPALAAASAACLALSAMLLADAVLMAAACFARRRPDRRYRATPLGAGAGADDDDDDEEAGRVAYPMVLVQIPMYNEREVYKLSIGAACGLSWPSDRLIVQVLDDSTDPTVKGLVELECKSWGNKGKNVKYEVRNTRKGYKAGALKEGLLRDYVQQCNYVAIFDADFQPEPDFLLRTIPYLVRNPQIGLVQAHWEFVNTSECLMTRIQKMTLHYHFKVEQEGGSSTFAFFGFNGTAGVWRISALEEAGGWKDRTTVEDMDLAVRAGLKGWKFVYLADVKVKSELPSNLKTYRHQQHRWTCGAANLFRKVGAEILFTKEVPFWWKFYLLYSFFFVRKVVAHVVPFMLYCVVIPFSVLIPEVTVPVWGVVYVPTTITLLHAIRNTSSIHFIPFWILFENVMSFHRTKAMFIGLLELGGVNEWVVTEKLGNGSNTKPASQILERPPCRFWDRWTMSEILFSIFLFFCATYNLAYGGDYYFVYIYLQAIAFLVVGIGFCGTISSNS</sequence>